<accession>E9QCD3</accession>
<organism>
    <name type="scientific">Danio rerio</name>
    <name type="common">Zebrafish</name>
    <name type="synonym">Brachydanio rerio</name>
    <dbReference type="NCBI Taxonomy" id="7955"/>
    <lineage>
        <taxon>Eukaryota</taxon>
        <taxon>Metazoa</taxon>
        <taxon>Chordata</taxon>
        <taxon>Craniata</taxon>
        <taxon>Vertebrata</taxon>
        <taxon>Euteleostomi</taxon>
        <taxon>Actinopterygii</taxon>
        <taxon>Neopterygii</taxon>
        <taxon>Teleostei</taxon>
        <taxon>Ostariophysi</taxon>
        <taxon>Cypriniformes</taxon>
        <taxon>Danionidae</taxon>
        <taxon>Danioninae</taxon>
        <taxon>Danio</taxon>
    </lineage>
</organism>
<reference key="1">
    <citation type="journal article" date="2013" name="Nature">
        <title>The zebrafish reference genome sequence and its relationship to the human genome.</title>
        <authorList>
            <person name="Howe K."/>
            <person name="Clark M.D."/>
            <person name="Torroja C.F."/>
            <person name="Torrance J."/>
            <person name="Berthelot C."/>
            <person name="Muffato M."/>
            <person name="Collins J.E."/>
            <person name="Humphray S."/>
            <person name="McLaren K."/>
            <person name="Matthews L."/>
            <person name="McLaren S."/>
            <person name="Sealy I."/>
            <person name="Caccamo M."/>
            <person name="Churcher C."/>
            <person name="Scott C."/>
            <person name="Barrett J.C."/>
            <person name="Koch R."/>
            <person name="Rauch G.J."/>
            <person name="White S."/>
            <person name="Chow W."/>
            <person name="Kilian B."/>
            <person name="Quintais L.T."/>
            <person name="Guerra-Assuncao J.A."/>
            <person name="Zhou Y."/>
            <person name="Gu Y."/>
            <person name="Yen J."/>
            <person name="Vogel J.H."/>
            <person name="Eyre T."/>
            <person name="Redmond S."/>
            <person name="Banerjee R."/>
            <person name="Chi J."/>
            <person name="Fu B."/>
            <person name="Langley E."/>
            <person name="Maguire S.F."/>
            <person name="Laird G.K."/>
            <person name="Lloyd D."/>
            <person name="Kenyon E."/>
            <person name="Donaldson S."/>
            <person name="Sehra H."/>
            <person name="Almeida-King J."/>
            <person name="Loveland J."/>
            <person name="Trevanion S."/>
            <person name="Jones M."/>
            <person name="Quail M."/>
            <person name="Willey D."/>
            <person name="Hunt A."/>
            <person name="Burton J."/>
            <person name="Sims S."/>
            <person name="McLay K."/>
            <person name="Plumb B."/>
            <person name="Davis J."/>
            <person name="Clee C."/>
            <person name="Oliver K."/>
            <person name="Clark R."/>
            <person name="Riddle C."/>
            <person name="Elliot D."/>
            <person name="Threadgold G."/>
            <person name="Harden G."/>
            <person name="Ware D."/>
            <person name="Begum S."/>
            <person name="Mortimore B."/>
            <person name="Kerry G."/>
            <person name="Heath P."/>
            <person name="Phillimore B."/>
            <person name="Tracey A."/>
            <person name="Corby N."/>
            <person name="Dunn M."/>
            <person name="Johnson C."/>
            <person name="Wood J."/>
            <person name="Clark S."/>
            <person name="Pelan S."/>
            <person name="Griffiths G."/>
            <person name="Smith M."/>
            <person name="Glithero R."/>
            <person name="Howden P."/>
            <person name="Barker N."/>
            <person name="Lloyd C."/>
            <person name="Stevens C."/>
            <person name="Harley J."/>
            <person name="Holt K."/>
            <person name="Panagiotidis G."/>
            <person name="Lovell J."/>
            <person name="Beasley H."/>
            <person name="Henderson C."/>
            <person name="Gordon D."/>
            <person name="Auger K."/>
            <person name="Wright D."/>
            <person name="Collins J."/>
            <person name="Raisen C."/>
            <person name="Dyer L."/>
            <person name="Leung K."/>
            <person name="Robertson L."/>
            <person name="Ambridge K."/>
            <person name="Leongamornlert D."/>
            <person name="McGuire S."/>
            <person name="Gilderthorp R."/>
            <person name="Griffiths C."/>
            <person name="Manthravadi D."/>
            <person name="Nichol S."/>
            <person name="Barker G."/>
            <person name="Whitehead S."/>
            <person name="Kay M."/>
            <person name="Brown J."/>
            <person name="Murnane C."/>
            <person name="Gray E."/>
            <person name="Humphries M."/>
            <person name="Sycamore N."/>
            <person name="Barker D."/>
            <person name="Saunders D."/>
            <person name="Wallis J."/>
            <person name="Babbage A."/>
            <person name="Hammond S."/>
            <person name="Mashreghi-Mohammadi M."/>
            <person name="Barr L."/>
            <person name="Martin S."/>
            <person name="Wray P."/>
            <person name="Ellington A."/>
            <person name="Matthews N."/>
            <person name="Ellwood M."/>
            <person name="Woodmansey R."/>
            <person name="Clark G."/>
            <person name="Cooper J."/>
            <person name="Tromans A."/>
            <person name="Grafham D."/>
            <person name="Skuce C."/>
            <person name="Pandian R."/>
            <person name="Andrews R."/>
            <person name="Harrison E."/>
            <person name="Kimberley A."/>
            <person name="Garnett J."/>
            <person name="Fosker N."/>
            <person name="Hall R."/>
            <person name="Garner P."/>
            <person name="Kelly D."/>
            <person name="Bird C."/>
            <person name="Palmer S."/>
            <person name="Gehring I."/>
            <person name="Berger A."/>
            <person name="Dooley C.M."/>
            <person name="Ersan-Urun Z."/>
            <person name="Eser C."/>
            <person name="Geiger H."/>
            <person name="Geisler M."/>
            <person name="Karotki L."/>
            <person name="Kirn A."/>
            <person name="Konantz J."/>
            <person name="Konantz M."/>
            <person name="Oberlander M."/>
            <person name="Rudolph-Geiger S."/>
            <person name="Teucke M."/>
            <person name="Lanz C."/>
            <person name="Raddatz G."/>
            <person name="Osoegawa K."/>
            <person name="Zhu B."/>
            <person name="Rapp A."/>
            <person name="Widaa S."/>
            <person name="Langford C."/>
            <person name="Yang F."/>
            <person name="Schuster S.C."/>
            <person name="Carter N.P."/>
            <person name="Harrow J."/>
            <person name="Ning Z."/>
            <person name="Herrero J."/>
            <person name="Searle S.M."/>
            <person name="Enright A."/>
            <person name="Geisler R."/>
            <person name="Plasterk R.H."/>
            <person name="Lee C."/>
            <person name="Westerfield M."/>
            <person name="de Jong P.J."/>
            <person name="Zon L.I."/>
            <person name="Postlethwait J.H."/>
            <person name="Nusslein-Volhard C."/>
            <person name="Hubbard T.J."/>
            <person name="Roest Crollius H."/>
            <person name="Rogers J."/>
            <person name="Stemple D.L."/>
        </authorList>
    </citation>
    <scope>NUCLEOTIDE SEQUENCE [LARGE SCALE GENOMIC DNA]</scope>
    <source>
        <strain>Tuebingen</strain>
    </source>
</reference>
<reference key="2">
    <citation type="journal article" date="2015" name="Neurotoxicol. Teratol.">
        <title>2-Bromopalmitate impairs neural stem/progenitor cell proliferation, promotes cell apoptosis and induces malformation in zebrafish embryonic brain.</title>
        <authorList>
            <person name="Wang C."/>
            <person name="Chen X."/>
            <person name="Shi W."/>
            <person name="Wang F."/>
            <person name="Du Z."/>
            <person name="Li X."/>
            <person name="Yao Y."/>
            <person name="Liu T."/>
            <person name="Shao T."/>
            <person name="Li G."/>
            <person name="Hao A."/>
        </authorList>
    </citation>
    <scope>DEVELOPMENTAL STAGE</scope>
</reference>
<reference key="3">
    <citation type="journal article" date="2016" name="Biochem. Biophys. Res. Commun.">
        <title>Protein palmitoylation activate zygotic gene expression during the maternal-to-zygotic transition.</title>
        <authorList>
            <person name="Du Z."/>
            <person name="Chen X."/>
            <person name="Li X."/>
            <person name="He K."/>
            <person name="Ji S."/>
            <person name="Shi W."/>
            <person name="Hao A."/>
        </authorList>
    </citation>
    <scope>DEVELOPMENTAL STAGE</scope>
</reference>
<dbReference type="EC" id="2.3.1.225" evidence="2"/>
<dbReference type="EMBL" id="AL953887">
    <property type="status" value="NOT_ANNOTATED_CDS"/>
    <property type="molecule type" value="Genomic_DNA"/>
</dbReference>
<dbReference type="SMR" id="E9QCD3"/>
<dbReference type="FunCoup" id="E9QCD3">
    <property type="interactions" value="859"/>
</dbReference>
<dbReference type="STRING" id="7955.ENSDARP00000053876"/>
<dbReference type="PaxDb" id="7955-ENSDARP00000053876"/>
<dbReference type="Ensembl" id="ENSDART00000053877">
    <property type="protein sequence ID" value="ENSDARP00000053876"/>
    <property type="gene ID" value="ENSDARG00000037069"/>
</dbReference>
<dbReference type="InParanoid" id="E9QCD3"/>
<dbReference type="OMA" id="QSHMCHQ"/>
<dbReference type="Proteomes" id="UP000000437">
    <property type="component" value="Unplaced"/>
</dbReference>
<dbReference type="Bgee" id="ENSDARG00000037069">
    <property type="expression patterns" value="Expressed in retina and 16 other cell types or tissues"/>
</dbReference>
<dbReference type="ExpressionAtlas" id="E9QCD3">
    <property type="expression patterns" value="baseline and differential"/>
</dbReference>
<dbReference type="GO" id="GO:0005789">
    <property type="term" value="C:endoplasmic reticulum membrane"/>
    <property type="evidence" value="ECO:0007669"/>
    <property type="project" value="UniProtKB-SubCell"/>
</dbReference>
<dbReference type="GO" id="GO:0000139">
    <property type="term" value="C:Golgi membrane"/>
    <property type="evidence" value="ECO:0007669"/>
    <property type="project" value="UniProtKB-SubCell"/>
</dbReference>
<dbReference type="GO" id="GO:0019706">
    <property type="term" value="F:protein-cysteine S-palmitoyltransferase activity"/>
    <property type="evidence" value="ECO:0007669"/>
    <property type="project" value="UniProtKB-EC"/>
</dbReference>
<dbReference type="GO" id="GO:0018230">
    <property type="term" value="P:peptidyl-L-cysteine S-palmitoylation"/>
    <property type="evidence" value="ECO:0000250"/>
    <property type="project" value="UniProtKB"/>
</dbReference>
<dbReference type="InterPro" id="IPR001594">
    <property type="entry name" value="Palmitoyltrfase_DHHC"/>
</dbReference>
<dbReference type="InterPro" id="IPR039859">
    <property type="entry name" value="PFA4/ZDH16/20/ERF2-like"/>
</dbReference>
<dbReference type="PANTHER" id="PTHR22883:SF28">
    <property type="entry name" value="PALMITOYLTRANSFERASE ZDHHC14"/>
    <property type="match status" value="1"/>
</dbReference>
<dbReference type="PANTHER" id="PTHR22883">
    <property type="entry name" value="ZINC FINGER DHHC DOMAIN CONTAINING PROTEIN"/>
    <property type="match status" value="1"/>
</dbReference>
<dbReference type="Pfam" id="PF01529">
    <property type="entry name" value="DHHC"/>
    <property type="match status" value="1"/>
</dbReference>
<dbReference type="PROSITE" id="PS50216">
    <property type="entry name" value="DHHC"/>
    <property type="match status" value="1"/>
</dbReference>
<evidence type="ECO:0000250" key="1">
    <source>
        <dbReference type="UniProtKB" id="Q8IUH5"/>
    </source>
</evidence>
<evidence type="ECO:0000250" key="2">
    <source>
        <dbReference type="UniProtKB" id="Q8IZN3"/>
    </source>
</evidence>
<evidence type="ECO:0000255" key="3"/>
<evidence type="ECO:0000255" key="4">
    <source>
        <dbReference type="PROSITE-ProRule" id="PRU00067"/>
    </source>
</evidence>
<evidence type="ECO:0000256" key="5">
    <source>
        <dbReference type="SAM" id="MobiDB-lite"/>
    </source>
</evidence>
<evidence type="ECO:0000269" key="6">
    <source>
    </source>
</evidence>
<evidence type="ECO:0000269" key="7">
    <source>
    </source>
</evidence>
<evidence type="ECO:0000303" key="8">
    <source>
    </source>
</evidence>
<evidence type="ECO:0000303" key="9">
    <source>
    </source>
</evidence>
<evidence type="ECO:0000305" key="10"/>
<protein>
    <recommendedName>
        <fullName evidence="10">Palmitoyltransferase ZDHHC14</fullName>
        <ecNumber evidence="2">2.3.1.225</ecNumber>
    </recommendedName>
    <alternativeName>
        <fullName evidence="8">DHHC domain-containing cysteine-rich protein 14</fullName>
        <shortName evidence="8">DHHC-14</shortName>
    </alternativeName>
    <alternativeName>
        <fullName evidence="9">Zinc finger DHHC domain-containing protein 14</fullName>
    </alternativeName>
</protein>
<gene>
    <name type="primary">zdhhc14</name>
</gene>
<name>ZDH14_DANRE</name>
<feature type="chain" id="PRO_0000451065" description="Palmitoyltransferase ZDHHC14">
    <location>
        <begin position="1"/>
        <end position="513"/>
    </location>
</feature>
<feature type="topological domain" description="Cytoplasmic" evidence="10">
    <location>
        <begin position="1"/>
        <end position="59"/>
    </location>
</feature>
<feature type="transmembrane region" description="Helical" evidence="3">
    <location>
        <begin position="60"/>
        <end position="80"/>
    </location>
</feature>
<feature type="topological domain" description="Lumenal" evidence="10">
    <location>
        <begin position="81"/>
        <end position="88"/>
    </location>
</feature>
<feature type="transmembrane region" description="Helical" evidence="3">
    <location>
        <begin position="89"/>
        <end position="109"/>
    </location>
</feature>
<feature type="topological domain" description="Cytoplasmic" evidence="10">
    <location>
        <begin position="110"/>
        <end position="207"/>
    </location>
</feature>
<feature type="transmembrane region" description="Helical" evidence="3">
    <location>
        <begin position="208"/>
        <end position="228"/>
    </location>
</feature>
<feature type="topological domain" description="Lumenal" evidence="10">
    <location>
        <begin position="229"/>
        <end position="266"/>
    </location>
</feature>
<feature type="transmembrane region" description="Helical" evidence="3">
    <location>
        <begin position="267"/>
        <end position="287"/>
    </location>
</feature>
<feature type="topological domain" description="Cytoplasmic" evidence="10">
    <location>
        <begin position="288"/>
        <end position="513"/>
    </location>
</feature>
<feature type="domain" description="DHHC" evidence="4">
    <location>
        <begin position="164"/>
        <end position="214"/>
    </location>
</feature>
<feature type="region of interest" description="Disordered" evidence="5">
    <location>
        <begin position="348"/>
        <end position="369"/>
    </location>
</feature>
<feature type="compositionally biased region" description="Polar residues" evidence="5">
    <location>
        <begin position="355"/>
        <end position="369"/>
    </location>
</feature>
<feature type="active site" description="S-palmitoyl cysteine intermediate" evidence="4">
    <location>
        <position position="194"/>
    </location>
</feature>
<sequence length="513" mass="56393">MHLGVEEPIRECQYNQICTHNSSPMDTPHIKKKKNKRKWQVFPGRNRFYCNGRIMMAKQTGVFYLTMVLILVTSGLFFAFDCPFLASNLTPAIPAIGGVLFVFVMGMLLRASFSDPGVLPRATPEEAADIERQIDANNGPSGPGYRPPPRTREVLINGQTVKLKYCFTCKIFRPPRASHCSLCDNCVDRFDHHCPWVGNCVGRRNYRFFYLFILSLSFLTIFIFAFVITHVILNALRKALALSTAADFEAVQKDPTGLAFLVLSKTALLDILEVVVCFFSVWSIVGLSGFHTYLISSNQTTNEDIKGSWSSKRGKGNYNPYSYGNFITNCCSALCGPLPPSLIDRRGFIQPDTPQPATQTNGTSACPPNQVQSHMCAQDQCIQSTKFVLQAATNPLLHSQPVILGGGPPLQAKTSLGGPCSTMGPPQPSLPSSIPGLSCGGELMALRDSEIHCHHHLHHQHFISPEETPSPPAPLPCATHLGHHVHPAQLFDPVSQDSLHEDSVRGLVKLSSV</sequence>
<comment type="function">
    <text evidence="2">Palmitoyltransferase that could catalyze the addition of palmitate onto various protein substrates.</text>
</comment>
<comment type="catalytic activity">
    <reaction evidence="2">
        <text>L-cysteinyl-[protein] + hexadecanoyl-CoA = S-hexadecanoyl-L-cysteinyl-[protein] + CoA</text>
        <dbReference type="Rhea" id="RHEA:36683"/>
        <dbReference type="Rhea" id="RHEA-COMP:10131"/>
        <dbReference type="Rhea" id="RHEA-COMP:11032"/>
        <dbReference type="ChEBI" id="CHEBI:29950"/>
        <dbReference type="ChEBI" id="CHEBI:57287"/>
        <dbReference type="ChEBI" id="CHEBI:57379"/>
        <dbReference type="ChEBI" id="CHEBI:74151"/>
        <dbReference type="EC" id="2.3.1.225"/>
    </reaction>
    <physiologicalReaction direction="left-to-right" evidence="2">
        <dbReference type="Rhea" id="RHEA:36684"/>
    </physiologicalReaction>
</comment>
<comment type="subcellular location">
    <subcellularLocation>
        <location evidence="2">Endoplasmic reticulum membrane</location>
        <topology evidence="3">Multi-pass membrane protein</topology>
    </subcellularLocation>
    <subcellularLocation>
        <location evidence="2">Golgi apparatus membrane</location>
        <topology evidence="3">Multi-pass membrane protein</topology>
    </subcellularLocation>
</comment>
<comment type="developmental stage">
    <text evidence="6 7">Probably maternally supplied, the zygotic expression becomes significant at 2.75 hpf and remains constant until 24 hpf.</text>
</comment>
<comment type="domain">
    <text evidence="1">The DHHC domain is required for palmitoyltransferase activity.</text>
</comment>
<comment type="similarity">
    <text evidence="10">Belongs to the DHHC palmitoyltransferase family. ERF2/ZDHHC9 subfamily.</text>
</comment>
<keyword id="KW-0012">Acyltransferase</keyword>
<keyword id="KW-0256">Endoplasmic reticulum</keyword>
<keyword id="KW-0333">Golgi apparatus</keyword>
<keyword id="KW-0449">Lipoprotein</keyword>
<keyword id="KW-0472">Membrane</keyword>
<keyword id="KW-0564">Palmitate</keyword>
<keyword id="KW-0597">Phosphoprotein</keyword>
<keyword id="KW-1185">Reference proteome</keyword>
<keyword id="KW-0808">Transferase</keyword>
<keyword id="KW-0812">Transmembrane</keyword>
<keyword id="KW-1133">Transmembrane helix</keyword>
<proteinExistence type="evidence at transcript level"/>